<feature type="chain" id="PRO_1000215128" description="Urease accessory protein UreF">
    <location>
        <begin position="1"/>
        <end position="224"/>
    </location>
</feature>
<evidence type="ECO:0000255" key="1">
    <source>
        <dbReference type="HAMAP-Rule" id="MF_01385"/>
    </source>
</evidence>
<dbReference type="EMBL" id="CP000094">
    <property type="protein sequence ID" value="ABA72306.1"/>
    <property type="molecule type" value="Genomic_DNA"/>
</dbReference>
<dbReference type="RefSeq" id="WP_011332213.1">
    <property type="nucleotide sequence ID" value="NC_007492.2"/>
</dbReference>
<dbReference type="SMR" id="Q3KIV0"/>
<dbReference type="KEGG" id="pfo:Pfl01_0562"/>
<dbReference type="eggNOG" id="COG0830">
    <property type="taxonomic scope" value="Bacteria"/>
</dbReference>
<dbReference type="HOGENOM" id="CLU_049215_2_1_6"/>
<dbReference type="Proteomes" id="UP000002704">
    <property type="component" value="Chromosome"/>
</dbReference>
<dbReference type="GO" id="GO:0005737">
    <property type="term" value="C:cytoplasm"/>
    <property type="evidence" value="ECO:0007669"/>
    <property type="project" value="UniProtKB-SubCell"/>
</dbReference>
<dbReference type="GO" id="GO:0016151">
    <property type="term" value="F:nickel cation binding"/>
    <property type="evidence" value="ECO:0007669"/>
    <property type="project" value="UniProtKB-UniRule"/>
</dbReference>
<dbReference type="Gene3D" id="1.10.4190.10">
    <property type="entry name" value="Urease accessory protein UreF"/>
    <property type="match status" value="1"/>
</dbReference>
<dbReference type="HAMAP" id="MF_01385">
    <property type="entry name" value="UreF"/>
    <property type="match status" value="1"/>
</dbReference>
<dbReference type="InterPro" id="IPR002639">
    <property type="entry name" value="UreF"/>
</dbReference>
<dbReference type="InterPro" id="IPR038277">
    <property type="entry name" value="UreF_sf"/>
</dbReference>
<dbReference type="PANTHER" id="PTHR33620">
    <property type="entry name" value="UREASE ACCESSORY PROTEIN F"/>
    <property type="match status" value="1"/>
</dbReference>
<dbReference type="PANTHER" id="PTHR33620:SF1">
    <property type="entry name" value="UREASE ACCESSORY PROTEIN F"/>
    <property type="match status" value="1"/>
</dbReference>
<dbReference type="Pfam" id="PF01730">
    <property type="entry name" value="UreF"/>
    <property type="match status" value="1"/>
</dbReference>
<dbReference type="PIRSF" id="PIRSF009467">
    <property type="entry name" value="Ureas_acces_UreF"/>
    <property type="match status" value="1"/>
</dbReference>
<proteinExistence type="inferred from homology"/>
<protein>
    <recommendedName>
        <fullName evidence="1">Urease accessory protein UreF</fullName>
    </recommendedName>
</protein>
<keyword id="KW-0143">Chaperone</keyword>
<keyword id="KW-0963">Cytoplasm</keyword>
<keyword id="KW-0996">Nickel insertion</keyword>
<sequence>MNPAWALLRLASPQLPIGGYSYSQGLEMAVDNGRVDSPDSARRWISDQLLLNLARFEAPLLLAHCQAAADEHWDELRKLCESHRASRETRELHLESRQMGYSLQQLLNGLPELDQPARDFLEHCAEPHLALCWALAARAWQISPQDALAAWLWSWLENQLAVLMKTLPLGQQAAQRLTSELLPLLQQAQQDATRINPEHLGSAAFGLSLACMAHERQYSRLFRS</sequence>
<comment type="function">
    <text evidence="1">Required for maturation of urease via the functional incorporation of the urease nickel metallocenter.</text>
</comment>
<comment type="subunit">
    <text evidence="1">UreD, UreF and UreG form a complex that acts as a GTP-hydrolysis-dependent molecular chaperone, activating the urease apoprotein by helping to assemble the nickel containing metallocenter of UreC. The UreE protein probably delivers the nickel.</text>
</comment>
<comment type="subcellular location">
    <subcellularLocation>
        <location evidence="1">Cytoplasm</location>
    </subcellularLocation>
</comment>
<comment type="similarity">
    <text evidence="1">Belongs to the UreF family.</text>
</comment>
<organism>
    <name type="scientific">Pseudomonas fluorescens (strain Pf0-1)</name>
    <dbReference type="NCBI Taxonomy" id="205922"/>
    <lineage>
        <taxon>Bacteria</taxon>
        <taxon>Pseudomonadati</taxon>
        <taxon>Pseudomonadota</taxon>
        <taxon>Gammaproteobacteria</taxon>
        <taxon>Pseudomonadales</taxon>
        <taxon>Pseudomonadaceae</taxon>
        <taxon>Pseudomonas</taxon>
    </lineage>
</organism>
<gene>
    <name evidence="1" type="primary">ureF</name>
    <name type="ordered locus">Pfl01_0562</name>
</gene>
<reference key="1">
    <citation type="journal article" date="2009" name="Genome Biol.">
        <title>Genomic and genetic analyses of diversity and plant interactions of Pseudomonas fluorescens.</title>
        <authorList>
            <person name="Silby M.W."/>
            <person name="Cerdeno-Tarraga A.M."/>
            <person name="Vernikos G.S."/>
            <person name="Giddens S.R."/>
            <person name="Jackson R.W."/>
            <person name="Preston G.M."/>
            <person name="Zhang X.-X."/>
            <person name="Moon C.D."/>
            <person name="Gehrig S.M."/>
            <person name="Godfrey S.A.C."/>
            <person name="Knight C.G."/>
            <person name="Malone J.G."/>
            <person name="Robinson Z."/>
            <person name="Spiers A.J."/>
            <person name="Harris S."/>
            <person name="Challis G.L."/>
            <person name="Yaxley A.M."/>
            <person name="Harris D."/>
            <person name="Seeger K."/>
            <person name="Murphy L."/>
            <person name="Rutter S."/>
            <person name="Squares R."/>
            <person name="Quail M.A."/>
            <person name="Saunders E."/>
            <person name="Mavromatis K."/>
            <person name="Brettin T.S."/>
            <person name="Bentley S.D."/>
            <person name="Hothersall J."/>
            <person name="Stephens E."/>
            <person name="Thomas C.M."/>
            <person name="Parkhill J."/>
            <person name="Levy S.B."/>
            <person name="Rainey P.B."/>
            <person name="Thomson N.R."/>
        </authorList>
    </citation>
    <scope>NUCLEOTIDE SEQUENCE [LARGE SCALE GENOMIC DNA]</scope>
    <source>
        <strain>Pf0-1</strain>
    </source>
</reference>
<accession>Q3KIV0</accession>
<name>UREF_PSEPF</name>